<reference evidence="5" key="1">
    <citation type="submission" date="2007-03" db="EMBL/GenBank/DDBJ databases">
        <title>Annotation of Culex pipiens quinquefasciatus.</title>
        <authorList>
            <consortium name="The Broad Institute Genome Sequencing Platform"/>
            <person name="Atkinson P.W."/>
            <person name="Hemingway J."/>
            <person name="Christensen B.M."/>
            <person name="Higgs S."/>
            <person name="Kodira C.D."/>
            <person name="Hannick L.I."/>
            <person name="Megy K."/>
            <person name="O'Leary S.B."/>
            <person name="Pearson M."/>
            <person name="Haas B.J."/>
            <person name="Mauceli E."/>
            <person name="Wortman J.R."/>
            <person name="Lee N.H."/>
            <person name="Guigo R."/>
            <person name="Stanke M."/>
            <person name="Alvarado L."/>
            <person name="Amedeo P."/>
            <person name="Antoine C.H."/>
            <person name="Arensburger P."/>
            <person name="Bidwell S.L."/>
            <person name="Crawford M."/>
            <person name="Camaro F."/>
            <person name="Devon K."/>
            <person name="Engels R."/>
            <person name="Hammond M."/>
            <person name="Howarth C."/>
            <person name="Koehrsen M."/>
            <person name="Lawson D."/>
            <person name="Montgomery P."/>
            <person name="Nene V."/>
            <person name="Nusbaum C."/>
            <person name="Puiu D."/>
            <person name="Romero-Severson J."/>
            <person name="Severson D.W."/>
            <person name="Shumway M."/>
            <person name="Sisk P."/>
            <person name="Stolte C."/>
            <person name="Zeng Q."/>
            <person name="Eisenstadt E."/>
            <person name="Fraser-Liggett C.M."/>
            <person name="Strausberg R."/>
            <person name="Galagan J."/>
            <person name="Birren B."/>
            <person name="Collins F.H."/>
        </authorList>
    </citation>
    <scope>NUCLEOTIDE SEQUENCE [LARGE SCALE GENOMIC DNA]</scope>
    <source>
        <strain evidence="5">JHB</strain>
    </source>
</reference>
<organism>
    <name type="scientific">Culex quinquefasciatus</name>
    <name type="common">Southern house mosquito</name>
    <name type="synonym">Culex pungens</name>
    <dbReference type="NCBI Taxonomy" id="7176"/>
    <lineage>
        <taxon>Eukaryota</taxon>
        <taxon>Metazoa</taxon>
        <taxon>Ecdysozoa</taxon>
        <taxon>Arthropoda</taxon>
        <taxon>Hexapoda</taxon>
        <taxon>Insecta</taxon>
        <taxon>Pterygota</taxon>
        <taxon>Neoptera</taxon>
        <taxon>Endopterygota</taxon>
        <taxon>Diptera</taxon>
        <taxon>Nematocera</taxon>
        <taxon>Culicoidea</taxon>
        <taxon>Culicidae</taxon>
        <taxon>Culicinae</taxon>
        <taxon>Culicini</taxon>
        <taxon>Culex</taxon>
        <taxon>Culex</taxon>
    </lineage>
</organism>
<name>CUE_CULQU</name>
<keyword id="KW-1003">Cell membrane</keyword>
<keyword id="KW-0221">Differentiation</keyword>
<keyword id="KW-1015">Disulfide bond</keyword>
<keyword id="KW-0245">EGF-like domain</keyword>
<keyword id="KW-0325">Glycoprotein</keyword>
<keyword id="KW-0472">Membrane</keyword>
<keyword id="KW-0896">Oogenesis</keyword>
<keyword id="KW-1185">Reference proteome</keyword>
<keyword id="KW-0677">Repeat</keyword>
<keyword id="KW-0732">Signal</keyword>
<keyword id="KW-0744">Spermatogenesis</keyword>
<keyword id="KW-0812">Transmembrane</keyword>
<keyword id="KW-1133">Transmembrane helix</keyword>
<sequence>MSGVTARMENSIITTDSGILFFDQNWTQVSSGGHQFQHISAFAYDEVKQKLYFSDLKDPKFRIFSLDANPQEEYHKVTKLLPKSDETAYITGLVFDHLERKLYWTERGTHALYSVEVDKIGNGTDAGSLISTVTKVEDNHDLAGLAIDECRRHLYWTNSYLQTSNVVRATMAGKVLNSHTEDVYEPKGIAVDHYSNRIYWVEKKFGRAFSIQSVNLEVEDVKTFISENDKAPTHVALNSRYLYWVDQQVGEVHETLKSDSTQSRVVYRGNRPTAIIIKSALLLNHQNNNPSCKSVIAKILDNVKRESEGELPQADKPTSAKPEMIICLNNGILNHNTNSCICLPEYQGNFCEIPICNNYCVHGKCVIGRDNRPTCECDAKFEGERCDRSKCDGFCLNSGNCSFSDATATCACPKNFSGKRCETAICTSDYCYNGRCMVEEGGSPKCQCNVGYRGERCEEYTCNNYCLNDGKCVLNNETMLVECRCGAEYTGKRCEIPKRFCSLDTGNPELQPYCDGIPLSSQQQQQQLVEPQISYCKNSFNRTVVYASLAFAASLFILMVILLIVRRFYEEGRPRITKRFKVTSNHTQMTSRPATQCEITIENCCNMNVCETPCFDTNLLQKSSSKAEDKQYLLDDIENIAGSYRKLPSCAGGDKNLP</sequence>
<feature type="signal peptide" evidence="2">
    <location>
        <begin position="1"/>
        <end status="unknown"/>
    </location>
</feature>
<feature type="chain" id="PRO_0000386568" description="Protein cueball" evidence="2">
    <location>
        <begin status="unknown"/>
        <end position="658"/>
    </location>
</feature>
<feature type="topological domain" description="Extracellular" evidence="2">
    <location>
        <begin position="1"/>
        <end position="543"/>
    </location>
</feature>
<feature type="transmembrane region" description="Helical" evidence="2">
    <location>
        <begin position="544"/>
        <end position="564"/>
    </location>
</feature>
<feature type="topological domain" description="Cytoplasmic" evidence="2">
    <location>
        <begin position="565"/>
        <end position="658"/>
    </location>
</feature>
<feature type="repeat" description="LDL-receptor class B 1" evidence="2">
    <location>
        <begin position="100"/>
        <end position="142"/>
    </location>
</feature>
<feature type="repeat" description="LDL-receptor class B 2" evidence="2">
    <location>
        <begin position="152"/>
        <end position="195"/>
    </location>
</feature>
<feature type="repeat" description="LDL-receptor class B 3" evidence="2">
    <location>
        <begin position="196"/>
        <end position="241"/>
    </location>
</feature>
<feature type="domain" description="EGF-like 1" evidence="3">
    <location>
        <begin position="352"/>
        <end position="384"/>
    </location>
</feature>
<feature type="domain" description="EGF-like 2" evidence="3">
    <location>
        <begin position="387"/>
        <end position="422"/>
    </location>
</feature>
<feature type="domain" description="EGF-like 3" evidence="3">
    <location>
        <begin position="458"/>
        <end position="495"/>
    </location>
</feature>
<feature type="glycosylation site" description="N-linked (GlcNAc...) asparagine" evidence="2">
    <location>
        <position position="25"/>
    </location>
</feature>
<feature type="glycosylation site" description="N-linked (GlcNAc...) asparagine" evidence="2">
    <location>
        <position position="122"/>
    </location>
</feature>
<feature type="glycosylation site" description="N-linked (GlcNAc...) asparagine" evidence="2">
    <location>
        <position position="400"/>
    </location>
</feature>
<feature type="glycosylation site" description="N-linked (GlcNAc...) asparagine" evidence="2">
    <location>
        <position position="415"/>
    </location>
</feature>
<feature type="glycosylation site" description="N-linked (GlcNAc...) asparagine" evidence="2">
    <location>
        <position position="476"/>
    </location>
</feature>
<feature type="glycosylation site" description="N-linked (GlcNAc...) asparagine" evidence="2">
    <location>
        <position position="541"/>
    </location>
</feature>
<feature type="disulfide bond" evidence="3">
    <location>
        <begin position="356"/>
        <end position="365"/>
    </location>
</feature>
<feature type="disulfide bond" evidence="3">
    <location>
        <begin position="360"/>
        <end position="375"/>
    </location>
</feature>
<feature type="disulfide bond" evidence="3">
    <location>
        <begin position="391"/>
        <end position="401"/>
    </location>
</feature>
<feature type="disulfide bond" evidence="3">
    <location>
        <begin position="395"/>
        <end position="410"/>
    </location>
</feature>
<feature type="disulfide bond" evidence="3">
    <location>
        <begin position="412"/>
        <end position="421"/>
    </location>
</feature>
<feature type="disulfide bond" evidence="3">
    <location>
        <begin position="462"/>
        <end position="472"/>
    </location>
</feature>
<feature type="disulfide bond" evidence="3">
    <location>
        <begin position="466"/>
        <end position="483"/>
    </location>
</feature>
<feature type="disulfide bond" evidence="3">
    <location>
        <begin position="485"/>
        <end position="494"/>
    </location>
</feature>
<evidence type="ECO:0000250" key="1">
    <source>
        <dbReference type="UniProtKB" id="Q95RU0"/>
    </source>
</evidence>
<evidence type="ECO:0000255" key="2"/>
<evidence type="ECO:0000255" key="3">
    <source>
        <dbReference type="PROSITE-ProRule" id="PRU00076"/>
    </source>
</evidence>
<evidence type="ECO:0000305" key="4"/>
<evidence type="ECO:0000312" key="5">
    <source>
        <dbReference type="EMBL" id="EDS27565.1"/>
    </source>
</evidence>
<gene>
    <name evidence="1" type="primary">cue</name>
    <name type="ORF">CPIJ006575</name>
</gene>
<proteinExistence type="inferred from homology"/>
<comment type="function">
    <text evidence="1">Has a role in spermatogenesis and oogenesis.</text>
</comment>
<comment type="subcellular location">
    <subcellularLocation>
        <location evidence="4">Cell membrane</location>
        <topology evidence="4">Single-pass type I membrane protein</topology>
    </subcellularLocation>
</comment>
<comment type="similarity">
    <text evidence="4">Belongs to the cueball family.</text>
</comment>
<dbReference type="EMBL" id="DS231933">
    <property type="protein sequence ID" value="EDS27565.1"/>
    <property type="molecule type" value="Genomic_DNA"/>
</dbReference>
<dbReference type="RefSeq" id="XP_001848072.1">
    <property type="nucleotide sequence ID" value="XM_001848020.1"/>
</dbReference>
<dbReference type="SMR" id="B0WH58"/>
<dbReference type="FunCoup" id="B0WH58">
    <property type="interactions" value="154"/>
</dbReference>
<dbReference type="STRING" id="7176.B0WH58"/>
<dbReference type="GlyCosmos" id="B0WH58">
    <property type="glycosylation" value="6 sites, No reported glycans"/>
</dbReference>
<dbReference type="EnsemblMetazoa" id="CPIJ006575-RA">
    <property type="protein sequence ID" value="CPIJ006575-PA"/>
    <property type="gene ID" value="CPIJ006575"/>
</dbReference>
<dbReference type="KEGG" id="cqu:CpipJ_CPIJ006575"/>
<dbReference type="VEuPathDB" id="VectorBase:CPIJ006575"/>
<dbReference type="VEuPathDB" id="VectorBase:CQUJHB001382"/>
<dbReference type="eggNOG" id="KOG1215">
    <property type="taxonomic scope" value="Eukaryota"/>
</dbReference>
<dbReference type="HOGENOM" id="CLU_026602_0_0_1"/>
<dbReference type="InParanoid" id="B0WH58"/>
<dbReference type="OMA" id="RCEQNST"/>
<dbReference type="OrthoDB" id="382013at2759"/>
<dbReference type="PhylomeDB" id="B0WH58"/>
<dbReference type="Proteomes" id="UP000002320">
    <property type="component" value="Unassembled WGS sequence"/>
</dbReference>
<dbReference type="GO" id="GO:0005886">
    <property type="term" value="C:plasma membrane"/>
    <property type="evidence" value="ECO:0007669"/>
    <property type="project" value="UniProtKB-SubCell"/>
</dbReference>
<dbReference type="GO" id="GO:0042813">
    <property type="term" value="F:Wnt receptor activity"/>
    <property type="evidence" value="ECO:0007669"/>
    <property type="project" value="TreeGrafter"/>
</dbReference>
<dbReference type="GO" id="GO:0017147">
    <property type="term" value="F:Wnt-protein binding"/>
    <property type="evidence" value="ECO:0007669"/>
    <property type="project" value="TreeGrafter"/>
</dbReference>
<dbReference type="GO" id="GO:0060070">
    <property type="term" value="P:canonical Wnt signaling pathway"/>
    <property type="evidence" value="ECO:0007669"/>
    <property type="project" value="TreeGrafter"/>
</dbReference>
<dbReference type="GO" id="GO:0048477">
    <property type="term" value="P:oogenesis"/>
    <property type="evidence" value="ECO:0007669"/>
    <property type="project" value="UniProtKB-KW"/>
</dbReference>
<dbReference type="GO" id="GO:0007283">
    <property type="term" value="P:spermatogenesis"/>
    <property type="evidence" value="ECO:0007669"/>
    <property type="project" value="UniProtKB-KW"/>
</dbReference>
<dbReference type="Gene3D" id="2.10.25.10">
    <property type="entry name" value="Laminin"/>
    <property type="match status" value="4"/>
</dbReference>
<dbReference type="Gene3D" id="2.120.10.30">
    <property type="entry name" value="TolB, C-terminal domain"/>
    <property type="match status" value="1"/>
</dbReference>
<dbReference type="InterPro" id="IPR011042">
    <property type="entry name" value="6-blade_b-propeller_TolB-like"/>
</dbReference>
<dbReference type="InterPro" id="IPR050778">
    <property type="entry name" value="Cueball_EGF_LRP_Nidogen"/>
</dbReference>
<dbReference type="InterPro" id="IPR000742">
    <property type="entry name" value="EGF-like_dom"/>
</dbReference>
<dbReference type="InterPro" id="IPR000033">
    <property type="entry name" value="LDLR_classB_rpt"/>
</dbReference>
<dbReference type="PANTHER" id="PTHR46513:SF42">
    <property type="entry name" value="PROTEIN CUEBALL"/>
    <property type="match status" value="1"/>
</dbReference>
<dbReference type="PANTHER" id="PTHR46513">
    <property type="entry name" value="VITELLOGENIN RECEPTOR-LIKE PROTEIN-RELATED-RELATED"/>
    <property type="match status" value="1"/>
</dbReference>
<dbReference type="SMART" id="SM00181">
    <property type="entry name" value="EGF"/>
    <property type="match status" value="5"/>
</dbReference>
<dbReference type="SMART" id="SM00135">
    <property type="entry name" value="LY"/>
    <property type="match status" value="5"/>
</dbReference>
<dbReference type="SUPFAM" id="SSF57196">
    <property type="entry name" value="EGF/Laminin"/>
    <property type="match status" value="4"/>
</dbReference>
<dbReference type="SUPFAM" id="SSF63825">
    <property type="entry name" value="YWTD domain"/>
    <property type="match status" value="1"/>
</dbReference>
<dbReference type="PROSITE" id="PS00022">
    <property type="entry name" value="EGF_1"/>
    <property type="match status" value="5"/>
</dbReference>
<dbReference type="PROSITE" id="PS01186">
    <property type="entry name" value="EGF_2"/>
    <property type="match status" value="1"/>
</dbReference>
<dbReference type="PROSITE" id="PS50026">
    <property type="entry name" value="EGF_3"/>
    <property type="match status" value="3"/>
</dbReference>
<protein>
    <recommendedName>
        <fullName evidence="1">Protein cueball</fullName>
    </recommendedName>
</protein>
<accession>B0WH58</accession>